<gene>
    <name evidence="1" type="primary">nfo</name>
    <name type="ordered locus">SbBS512_E0807</name>
</gene>
<accession>B2TVT4</accession>
<comment type="function">
    <text evidence="1">Endonuclease IV plays a role in DNA repair. It cleaves phosphodiester bonds at apurinic or apyrimidinic (AP) sites, generating a 3'-hydroxyl group and a 5'-terminal sugar phosphate.</text>
</comment>
<comment type="catalytic activity">
    <reaction evidence="1">
        <text>Endonucleolytic cleavage to 5'-phosphooligonucleotide end-products.</text>
        <dbReference type="EC" id="3.1.21.2"/>
    </reaction>
</comment>
<comment type="cofactor">
    <cofactor evidence="1">
        <name>Zn(2+)</name>
        <dbReference type="ChEBI" id="CHEBI:29105"/>
    </cofactor>
    <text evidence="1">Binds 3 Zn(2+) ions.</text>
</comment>
<comment type="similarity">
    <text evidence="1">Belongs to the AP endonuclease 2 family.</text>
</comment>
<dbReference type="EC" id="3.1.21.2" evidence="1"/>
<dbReference type="EMBL" id="CP001063">
    <property type="protein sequence ID" value="ACD06479.1"/>
    <property type="molecule type" value="Genomic_DNA"/>
</dbReference>
<dbReference type="RefSeq" id="WP_000873888.1">
    <property type="nucleotide sequence ID" value="NC_010658.1"/>
</dbReference>
<dbReference type="SMR" id="B2TVT4"/>
<dbReference type="STRING" id="344609.SbBS512_E0807"/>
<dbReference type="KEGG" id="sbc:SbBS512_E0807"/>
<dbReference type="HOGENOM" id="CLU_025885_0_4_6"/>
<dbReference type="Proteomes" id="UP000001030">
    <property type="component" value="Chromosome"/>
</dbReference>
<dbReference type="GO" id="GO:0008833">
    <property type="term" value="F:deoxyribonuclease IV (phage-T4-induced) activity"/>
    <property type="evidence" value="ECO:0007669"/>
    <property type="project" value="UniProtKB-UniRule"/>
</dbReference>
<dbReference type="GO" id="GO:0003677">
    <property type="term" value="F:DNA binding"/>
    <property type="evidence" value="ECO:0007669"/>
    <property type="project" value="InterPro"/>
</dbReference>
<dbReference type="GO" id="GO:0003906">
    <property type="term" value="F:DNA-(apurinic or apyrimidinic site) endonuclease activity"/>
    <property type="evidence" value="ECO:0007669"/>
    <property type="project" value="TreeGrafter"/>
</dbReference>
<dbReference type="GO" id="GO:0008081">
    <property type="term" value="F:phosphoric diester hydrolase activity"/>
    <property type="evidence" value="ECO:0007669"/>
    <property type="project" value="TreeGrafter"/>
</dbReference>
<dbReference type="GO" id="GO:0008270">
    <property type="term" value="F:zinc ion binding"/>
    <property type="evidence" value="ECO:0007669"/>
    <property type="project" value="UniProtKB-UniRule"/>
</dbReference>
<dbReference type="GO" id="GO:0006284">
    <property type="term" value="P:base-excision repair"/>
    <property type="evidence" value="ECO:0007669"/>
    <property type="project" value="TreeGrafter"/>
</dbReference>
<dbReference type="CDD" id="cd00019">
    <property type="entry name" value="AP2Ec"/>
    <property type="match status" value="1"/>
</dbReference>
<dbReference type="FunFam" id="3.20.20.150:FF:000001">
    <property type="entry name" value="Probable endonuclease 4"/>
    <property type="match status" value="1"/>
</dbReference>
<dbReference type="Gene3D" id="3.20.20.150">
    <property type="entry name" value="Divalent-metal-dependent TIM barrel enzymes"/>
    <property type="match status" value="1"/>
</dbReference>
<dbReference type="HAMAP" id="MF_00152">
    <property type="entry name" value="Nfo"/>
    <property type="match status" value="1"/>
</dbReference>
<dbReference type="InterPro" id="IPR001719">
    <property type="entry name" value="AP_endonuc_2"/>
</dbReference>
<dbReference type="InterPro" id="IPR018246">
    <property type="entry name" value="AP_endonuc_F2_Zn_BS"/>
</dbReference>
<dbReference type="InterPro" id="IPR036237">
    <property type="entry name" value="Xyl_isomerase-like_sf"/>
</dbReference>
<dbReference type="InterPro" id="IPR013022">
    <property type="entry name" value="Xyl_isomerase-like_TIM-brl"/>
</dbReference>
<dbReference type="NCBIfam" id="TIGR00587">
    <property type="entry name" value="nfo"/>
    <property type="match status" value="1"/>
</dbReference>
<dbReference type="NCBIfam" id="NF002199">
    <property type="entry name" value="PRK01060.1-4"/>
    <property type="match status" value="1"/>
</dbReference>
<dbReference type="PANTHER" id="PTHR21445:SF0">
    <property type="entry name" value="APURINIC-APYRIMIDINIC ENDONUCLEASE"/>
    <property type="match status" value="1"/>
</dbReference>
<dbReference type="PANTHER" id="PTHR21445">
    <property type="entry name" value="ENDONUCLEASE IV ENDODEOXYRIBONUCLEASE IV"/>
    <property type="match status" value="1"/>
</dbReference>
<dbReference type="Pfam" id="PF01261">
    <property type="entry name" value="AP_endonuc_2"/>
    <property type="match status" value="1"/>
</dbReference>
<dbReference type="SMART" id="SM00518">
    <property type="entry name" value="AP2Ec"/>
    <property type="match status" value="1"/>
</dbReference>
<dbReference type="SUPFAM" id="SSF51658">
    <property type="entry name" value="Xylose isomerase-like"/>
    <property type="match status" value="1"/>
</dbReference>
<dbReference type="PROSITE" id="PS00729">
    <property type="entry name" value="AP_NUCLEASE_F2_1"/>
    <property type="match status" value="1"/>
</dbReference>
<dbReference type="PROSITE" id="PS00730">
    <property type="entry name" value="AP_NUCLEASE_F2_2"/>
    <property type="match status" value="1"/>
</dbReference>
<dbReference type="PROSITE" id="PS00731">
    <property type="entry name" value="AP_NUCLEASE_F2_3"/>
    <property type="match status" value="1"/>
</dbReference>
<dbReference type="PROSITE" id="PS51432">
    <property type="entry name" value="AP_NUCLEASE_F2_4"/>
    <property type="match status" value="1"/>
</dbReference>
<organism>
    <name type="scientific">Shigella boydii serotype 18 (strain CDC 3083-94 / BS512)</name>
    <dbReference type="NCBI Taxonomy" id="344609"/>
    <lineage>
        <taxon>Bacteria</taxon>
        <taxon>Pseudomonadati</taxon>
        <taxon>Pseudomonadota</taxon>
        <taxon>Gammaproteobacteria</taxon>
        <taxon>Enterobacterales</taxon>
        <taxon>Enterobacteriaceae</taxon>
        <taxon>Shigella</taxon>
    </lineage>
</organism>
<proteinExistence type="inferred from homology"/>
<reference key="1">
    <citation type="submission" date="2008-05" db="EMBL/GenBank/DDBJ databases">
        <title>Complete sequence of Shigella boydii serotype 18 strain BS512.</title>
        <authorList>
            <person name="Rasko D.A."/>
            <person name="Rosovitz M."/>
            <person name="Maurelli A.T."/>
            <person name="Myers G."/>
            <person name="Seshadri R."/>
            <person name="Cer R."/>
            <person name="Jiang L."/>
            <person name="Ravel J."/>
            <person name="Sebastian Y."/>
        </authorList>
    </citation>
    <scope>NUCLEOTIDE SEQUENCE [LARGE SCALE GENOMIC DNA]</scope>
    <source>
        <strain>CDC 3083-94 / BS512</strain>
    </source>
</reference>
<keyword id="KW-0227">DNA damage</keyword>
<keyword id="KW-0234">DNA repair</keyword>
<keyword id="KW-0255">Endonuclease</keyword>
<keyword id="KW-0378">Hydrolase</keyword>
<keyword id="KW-0479">Metal-binding</keyword>
<keyword id="KW-0540">Nuclease</keyword>
<keyword id="KW-1185">Reference proteome</keyword>
<keyword id="KW-0862">Zinc</keyword>
<name>END4_SHIB3</name>
<evidence type="ECO:0000255" key="1">
    <source>
        <dbReference type="HAMAP-Rule" id="MF_00152"/>
    </source>
</evidence>
<sequence>MKYIGAHVSAAGGLANAAIRAAEIDATAFALFTKNQRQWRAAPLTTQTIDEFKAACEKYHYTSAQILPHDSYLINLGHPVTEALEKSRDAFIDEMQRCEQLGLSLLNFHPGSHLMQISEEDCLARIAESINIALDKTQGVTAVIENTAGQGSNLGFKFEHLAAIIDGVEDKSRVGVCIDTCHAFAAGYDLRTPAECEKTFADFARIVGFKYLRGMHLNDAKSTFGSRVDRHHSLGEDNIGHDAFRWIMQDDRFDGIPLILETINPDIWAEEIAWLKAQQTEKAVA</sequence>
<feature type="chain" id="PRO_1000096906" description="Probable endonuclease 4">
    <location>
        <begin position="1"/>
        <end position="285"/>
    </location>
</feature>
<feature type="binding site" evidence="1">
    <location>
        <position position="69"/>
    </location>
    <ligand>
        <name>Zn(2+)</name>
        <dbReference type="ChEBI" id="CHEBI:29105"/>
        <label>1</label>
    </ligand>
</feature>
<feature type="binding site" evidence="1">
    <location>
        <position position="109"/>
    </location>
    <ligand>
        <name>Zn(2+)</name>
        <dbReference type="ChEBI" id="CHEBI:29105"/>
        <label>1</label>
    </ligand>
</feature>
<feature type="binding site" evidence="1">
    <location>
        <position position="145"/>
    </location>
    <ligand>
        <name>Zn(2+)</name>
        <dbReference type="ChEBI" id="CHEBI:29105"/>
        <label>1</label>
    </ligand>
</feature>
<feature type="binding site" evidence="1">
    <location>
        <position position="145"/>
    </location>
    <ligand>
        <name>Zn(2+)</name>
        <dbReference type="ChEBI" id="CHEBI:29105"/>
        <label>2</label>
    </ligand>
</feature>
<feature type="binding site" evidence="1">
    <location>
        <position position="179"/>
    </location>
    <ligand>
        <name>Zn(2+)</name>
        <dbReference type="ChEBI" id="CHEBI:29105"/>
        <label>2</label>
    </ligand>
</feature>
<feature type="binding site" evidence="1">
    <location>
        <position position="182"/>
    </location>
    <ligand>
        <name>Zn(2+)</name>
        <dbReference type="ChEBI" id="CHEBI:29105"/>
        <label>3</label>
    </ligand>
</feature>
<feature type="binding site" evidence="1">
    <location>
        <position position="216"/>
    </location>
    <ligand>
        <name>Zn(2+)</name>
        <dbReference type="ChEBI" id="CHEBI:29105"/>
        <label>2</label>
    </ligand>
</feature>
<feature type="binding site" evidence="1">
    <location>
        <position position="229"/>
    </location>
    <ligand>
        <name>Zn(2+)</name>
        <dbReference type="ChEBI" id="CHEBI:29105"/>
        <label>3</label>
    </ligand>
</feature>
<feature type="binding site" evidence="1">
    <location>
        <position position="231"/>
    </location>
    <ligand>
        <name>Zn(2+)</name>
        <dbReference type="ChEBI" id="CHEBI:29105"/>
        <label>3</label>
    </ligand>
</feature>
<feature type="binding site" evidence="1">
    <location>
        <position position="261"/>
    </location>
    <ligand>
        <name>Zn(2+)</name>
        <dbReference type="ChEBI" id="CHEBI:29105"/>
        <label>2</label>
    </ligand>
</feature>
<protein>
    <recommendedName>
        <fullName evidence="1">Probable endonuclease 4</fullName>
        <ecNumber evidence="1">3.1.21.2</ecNumber>
    </recommendedName>
    <alternativeName>
        <fullName evidence="1">Endodeoxyribonuclease IV</fullName>
    </alternativeName>
    <alternativeName>
        <fullName evidence="1">Endonuclease IV</fullName>
    </alternativeName>
</protein>